<accession>Q66DY8</accession>
<dbReference type="EC" id="1.2.1.41" evidence="1"/>
<dbReference type="EMBL" id="BX936398">
    <property type="protein sequence ID" value="CAH20145.1"/>
    <property type="molecule type" value="Genomic_DNA"/>
</dbReference>
<dbReference type="RefSeq" id="WP_011191846.1">
    <property type="nucleotide sequence ID" value="NC_006155.1"/>
</dbReference>
<dbReference type="SMR" id="Q66DY8"/>
<dbReference type="KEGG" id="ypo:BZ17_1641"/>
<dbReference type="KEGG" id="yps:YPTB0905"/>
<dbReference type="PATRIC" id="fig|273123.14.peg.1744"/>
<dbReference type="UniPathway" id="UPA00098">
    <property type="reaction ID" value="UER00360"/>
</dbReference>
<dbReference type="Proteomes" id="UP000001011">
    <property type="component" value="Chromosome"/>
</dbReference>
<dbReference type="GO" id="GO:0005737">
    <property type="term" value="C:cytoplasm"/>
    <property type="evidence" value="ECO:0007669"/>
    <property type="project" value="UniProtKB-SubCell"/>
</dbReference>
<dbReference type="GO" id="GO:0004350">
    <property type="term" value="F:glutamate-5-semialdehyde dehydrogenase activity"/>
    <property type="evidence" value="ECO:0007669"/>
    <property type="project" value="UniProtKB-UniRule"/>
</dbReference>
<dbReference type="GO" id="GO:0050661">
    <property type="term" value="F:NADP binding"/>
    <property type="evidence" value="ECO:0007669"/>
    <property type="project" value="InterPro"/>
</dbReference>
<dbReference type="GO" id="GO:0055129">
    <property type="term" value="P:L-proline biosynthetic process"/>
    <property type="evidence" value="ECO:0007669"/>
    <property type="project" value="UniProtKB-UniRule"/>
</dbReference>
<dbReference type="CDD" id="cd07079">
    <property type="entry name" value="ALDH_F18-19_ProA-GPR"/>
    <property type="match status" value="1"/>
</dbReference>
<dbReference type="FunFam" id="3.40.309.10:FF:000006">
    <property type="entry name" value="Gamma-glutamyl phosphate reductase"/>
    <property type="match status" value="1"/>
</dbReference>
<dbReference type="Gene3D" id="3.40.605.10">
    <property type="entry name" value="Aldehyde Dehydrogenase, Chain A, domain 1"/>
    <property type="match status" value="1"/>
</dbReference>
<dbReference type="Gene3D" id="3.40.309.10">
    <property type="entry name" value="Aldehyde Dehydrogenase, Chain A, domain 2"/>
    <property type="match status" value="1"/>
</dbReference>
<dbReference type="HAMAP" id="MF_00412">
    <property type="entry name" value="ProA"/>
    <property type="match status" value="1"/>
</dbReference>
<dbReference type="InterPro" id="IPR016161">
    <property type="entry name" value="Ald_DH/histidinol_DH"/>
</dbReference>
<dbReference type="InterPro" id="IPR016163">
    <property type="entry name" value="Ald_DH_C"/>
</dbReference>
<dbReference type="InterPro" id="IPR016162">
    <property type="entry name" value="Ald_DH_N"/>
</dbReference>
<dbReference type="InterPro" id="IPR015590">
    <property type="entry name" value="Aldehyde_DH_dom"/>
</dbReference>
<dbReference type="InterPro" id="IPR020593">
    <property type="entry name" value="G-glutamylP_reductase_CS"/>
</dbReference>
<dbReference type="InterPro" id="IPR012134">
    <property type="entry name" value="Glu-5-SA_DH"/>
</dbReference>
<dbReference type="InterPro" id="IPR000965">
    <property type="entry name" value="GPR_dom"/>
</dbReference>
<dbReference type="NCBIfam" id="NF001221">
    <property type="entry name" value="PRK00197.1"/>
    <property type="match status" value="1"/>
</dbReference>
<dbReference type="NCBIfam" id="TIGR00407">
    <property type="entry name" value="proA"/>
    <property type="match status" value="1"/>
</dbReference>
<dbReference type="PANTHER" id="PTHR11063:SF8">
    <property type="entry name" value="DELTA-1-PYRROLINE-5-CARBOXYLATE SYNTHASE"/>
    <property type="match status" value="1"/>
</dbReference>
<dbReference type="PANTHER" id="PTHR11063">
    <property type="entry name" value="GLUTAMATE SEMIALDEHYDE DEHYDROGENASE"/>
    <property type="match status" value="1"/>
</dbReference>
<dbReference type="Pfam" id="PF00171">
    <property type="entry name" value="Aldedh"/>
    <property type="match status" value="1"/>
</dbReference>
<dbReference type="PIRSF" id="PIRSF000151">
    <property type="entry name" value="GPR"/>
    <property type="match status" value="1"/>
</dbReference>
<dbReference type="SUPFAM" id="SSF53720">
    <property type="entry name" value="ALDH-like"/>
    <property type="match status" value="1"/>
</dbReference>
<dbReference type="PROSITE" id="PS01223">
    <property type="entry name" value="PROA"/>
    <property type="match status" value="1"/>
</dbReference>
<organism>
    <name type="scientific">Yersinia pseudotuberculosis serotype I (strain IP32953)</name>
    <dbReference type="NCBI Taxonomy" id="273123"/>
    <lineage>
        <taxon>Bacteria</taxon>
        <taxon>Pseudomonadati</taxon>
        <taxon>Pseudomonadota</taxon>
        <taxon>Gammaproteobacteria</taxon>
        <taxon>Enterobacterales</taxon>
        <taxon>Yersiniaceae</taxon>
        <taxon>Yersinia</taxon>
    </lineage>
</organism>
<proteinExistence type="inferred from homology"/>
<keyword id="KW-0028">Amino-acid biosynthesis</keyword>
<keyword id="KW-0963">Cytoplasm</keyword>
<keyword id="KW-0521">NADP</keyword>
<keyword id="KW-0560">Oxidoreductase</keyword>
<keyword id="KW-0641">Proline biosynthesis</keyword>
<reference key="1">
    <citation type="journal article" date="2004" name="Proc. Natl. Acad. Sci. U.S.A.">
        <title>Insights into the evolution of Yersinia pestis through whole-genome comparison with Yersinia pseudotuberculosis.</title>
        <authorList>
            <person name="Chain P.S.G."/>
            <person name="Carniel E."/>
            <person name="Larimer F.W."/>
            <person name="Lamerdin J."/>
            <person name="Stoutland P.O."/>
            <person name="Regala W.M."/>
            <person name="Georgescu A.M."/>
            <person name="Vergez L.M."/>
            <person name="Land M.L."/>
            <person name="Motin V.L."/>
            <person name="Brubaker R.R."/>
            <person name="Fowler J."/>
            <person name="Hinnebusch J."/>
            <person name="Marceau M."/>
            <person name="Medigue C."/>
            <person name="Simonet M."/>
            <person name="Chenal-Francisque V."/>
            <person name="Souza B."/>
            <person name="Dacheux D."/>
            <person name="Elliott J.M."/>
            <person name="Derbise A."/>
            <person name="Hauser L.J."/>
            <person name="Garcia E."/>
        </authorList>
    </citation>
    <scope>NUCLEOTIDE SEQUENCE [LARGE SCALE GENOMIC DNA]</scope>
    <source>
        <strain>IP32953</strain>
    </source>
</reference>
<sequence>MNLLEHMGKAAKQASWQLAMLSTAKKNQALAVIANLLESESQTILQANERDMAAARESGMSEALLDRLLLTPARLAAIANDVRQVCRLNDPVGRVIDGSLLDSGLKLERRRVPLGVIGVIYEARPNVTIDVASLCLKTGNAVILRGGKETHHTNQATVNVIQRALEQCGLPAAAVQAIESPDRQLVNELLRLDRYVDMLIPRGGASLHKLCREQSTIPVITGGIGVCHTFVDENADFEKALLVIENAKIQRPSACNSLETLLVHQAVAKTFLPLLSARMHAFGVTLHASPLAMPYLADGKAKVVAVEAADYDDEWLSLDLNVDIVTDIDAAIDHIREHGTSHSDAILTRSLSHAEYFVRAVDSSAVYVNASTRFTDGGQFGLGAEVAVSTQKLHARGPMGLDALTTYKWIGYGDDLVRS</sequence>
<name>PROA_YERPS</name>
<evidence type="ECO:0000255" key="1">
    <source>
        <dbReference type="HAMAP-Rule" id="MF_00412"/>
    </source>
</evidence>
<comment type="function">
    <text evidence="1">Catalyzes the NADPH-dependent reduction of L-glutamate 5-phosphate into L-glutamate 5-semialdehyde and phosphate. The product spontaneously undergoes cyclization to form 1-pyrroline-5-carboxylate.</text>
</comment>
<comment type="catalytic activity">
    <reaction evidence="1">
        <text>L-glutamate 5-semialdehyde + phosphate + NADP(+) = L-glutamyl 5-phosphate + NADPH + H(+)</text>
        <dbReference type="Rhea" id="RHEA:19541"/>
        <dbReference type="ChEBI" id="CHEBI:15378"/>
        <dbReference type="ChEBI" id="CHEBI:43474"/>
        <dbReference type="ChEBI" id="CHEBI:57783"/>
        <dbReference type="ChEBI" id="CHEBI:58066"/>
        <dbReference type="ChEBI" id="CHEBI:58274"/>
        <dbReference type="ChEBI" id="CHEBI:58349"/>
        <dbReference type="EC" id="1.2.1.41"/>
    </reaction>
</comment>
<comment type="pathway">
    <text evidence="1">Amino-acid biosynthesis; L-proline biosynthesis; L-glutamate 5-semialdehyde from L-glutamate: step 2/2.</text>
</comment>
<comment type="subcellular location">
    <subcellularLocation>
        <location evidence="1">Cytoplasm</location>
    </subcellularLocation>
</comment>
<comment type="similarity">
    <text evidence="1">Belongs to the gamma-glutamyl phosphate reductase family.</text>
</comment>
<protein>
    <recommendedName>
        <fullName evidence="1">Gamma-glutamyl phosphate reductase</fullName>
        <shortName evidence="1">GPR</shortName>
        <ecNumber evidence="1">1.2.1.41</ecNumber>
    </recommendedName>
    <alternativeName>
        <fullName evidence="1">Glutamate-5-semialdehyde dehydrogenase</fullName>
    </alternativeName>
    <alternativeName>
        <fullName evidence="1">Glutamyl-gamma-semialdehyde dehydrogenase</fullName>
        <shortName evidence="1">GSA dehydrogenase</shortName>
    </alternativeName>
</protein>
<feature type="chain" id="PRO_0000189819" description="Gamma-glutamyl phosphate reductase">
    <location>
        <begin position="1"/>
        <end position="419"/>
    </location>
</feature>
<gene>
    <name evidence="1" type="primary">proA</name>
    <name type="ordered locus">YPTB0905</name>
</gene>